<feature type="chain" id="PRO_0000100688" description="Sulfate adenylyltransferase subunit 2">
    <location>
        <begin position="1"/>
        <end position="299"/>
    </location>
</feature>
<feature type="sequence variant" description="In strain: CIAT899.">
    <original>R</original>
    <variation>P</variation>
    <location>
        <position position="63"/>
    </location>
</feature>
<reference key="1">
    <citation type="journal article" date="1996" name="Mol. Plant Microbe Interact.">
        <title>Isolation and characterization of Rhizobium tropici Nod factor sulfation genes.</title>
        <authorList>
            <person name="Laeremans T."/>
            <person name="Caluwaerts I."/>
            <person name="Verreth C."/>
            <person name="Rogel M.A."/>
            <person name="Vanderleyden J."/>
            <person name="Martinez-Romero E."/>
        </authorList>
    </citation>
    <scope>NUCLEOTIDE SEQUENCE [GENOMIC DNA]</scope>
    <source>
        <strain>CFN 299</strain>
    </source>
</reference>
<reference key="2">
    <citation type="journal article" date="1996" name="Mol. Plant Microbe Interact.">
        <title>Characterization of Rhizobium tropici CIAT899 nodulation factors: the role of nodH and nodPQ genes in their sulfation.</title>
        <authorList>
            <person name="Folch-Mallol J.L."/>
            <person name="Marroqui S."/>
            <person name="Sousa C."/>
            <person name="Manyani H."/>
            <person name="Lopez-Lara I.M."/>
            <person name="van der Drift K.M.G.M."/>
            <person name="Haverkamp J."/>
            <person name="Quinto C."/>
            <person name="Gil-Serrano A."/>
            <person name="Thomas-Oates J."/>
            <person name="Spaink H.P."/>
            <person name="Megias M."/>
        </authorList>
    </citation>
    <scope>NUCLEOTIDE SEQUENCE [GENOMIC DNA]</scope>
    <source>
        <strain>CIAT899</strain>
    </source>
</reference>
<name>NODP_RHITR</name>
<gene>
    <name type="primary">nodP</name>
</gene>
<accession>P52995</accession>
<accession>P72310</accession>
<keyword id="KW-0067">ATP-binding</keyword>
<keyword id="KW-0536">Nodulation</keyword>
<keyword id="KW-0547">Nucleotide-binding</keyword>
<keyword id="KW-0548">Nucleotidyltransferase</keyword>
<keyword id="KW-0808">Transferase</keyword>
<evidence type="ECO:0000305" key="1"/>
<protein>
    <recommendedName>
        <fullName>Sulfate adenylyltransferase subunit 2</fullName>
        <ecNumber>2.7.7.4</ecNumber>
    </recommendedName>
    <alternativeName>
        <fullName>ATP-sulfurylase small subunit</fullName>
    </alternativeName>
    <alternativeName>
        <fullName>Nodulation protein P</fullName>
    </alternativeName>
    <alternativeName>
        <fullName>Sulfate adenylate transferase</fullName>
        <shortName>SAT</shortName>
    </alternativeName>
</protein>
<dbReference type="EC" id="2.7.7.4"/>
<dbReference type="EMBL" id="U47272">
    <property type="protein sequence ID" value="AAB08983.1"/>
    <property type="molecule type" value="Genomic_DNA"/>
</dbReference>
<dbReference type="EMBL" id="X87608">
    <property type="protein sequence ID" value="CAA60913.1"/>
    <property type="molecule type" value="Genomic_DNA"/>
</dbReference>
<dbReference type="SMR" id="P52995"/>
<dbReference type="GO" id="GO:0005524">
    <property type="term" value="F:ATP binding"/>
    <property type="evidence" value="ECO:0007669"/>
    <property type="project" value="UniProtKB-KW"/>
</dbReference>
<dbReference type="GO" id="GO:0004781">
    <property type="term" value="F:sulfate adenylyltransferase (ATP) activity"/>
    <property type="evidence" value="ECO:0007669"/>
    <property type="project" value="UniProtKB-UniRule"/>
</dbReference>
<dbReference type="GO" id="GO:0070814">
    <property type="term" value="P:hydrogen sulfide biosynthetic process"/>
    <property type="evidence" value="ECO:0007669"/>
    <property type="project" value="UniProtKB-UniRule"/>
</dbReference>
<dbReference type="GO" id="GO:0000103">
    <property type="term" value="P:sulfate assimilation"/>
    <property type="evidence" value="ECO:0007669"/>
    <property type="project" value="UniProtKB-UniRule"/>
</dbReference>
<dbReference type="FunFam" id="3.40.50.620:FF:000002">
    <property type="entry name" value="Sulfate adenylyltransferase subunit 2"/>
    <property type="match status" value="1"/>
</dbReference>
<dbReference type="Gene3D" id="3.40.50.620">
    <property type="entry name" value="HUPs"/>
    <property type="match status" value="1"/>
</dbReference>
<dbReference type="HAMAP" id="MF_00064">
    <property type="entry name" value="Sulf_adenylyltr_sub2"/>
    <property type="match status" value="1"/>
</dbReference>
<dbReference type="InterPro" id="IPR002500">
    <property type="entry name" value="PAPS_reduct_dom"/>
</dbReference>
<dbReference type="InterPro" id="IPR014729">
    <property type="entry name" value="Rossmann-like_a/b/a_fold"/>
</dbReference>
<dbReference type="InterPro" id="IPR011784">
    <property type="entry name" value="SO4_adenylTrfase_ssu"/>
</dbReference>
<dbReference type="InterPro" id="IPR050128">
    <property type="entry name" value="Sulfate_adenylyltrnsfr_sub2"/>
</dbReference>
<dbReference type="NCBIfam" id="TIGR02039">
    <property type="entry name" value="CysD"/>
    <property type="match status" value="1"/>
</dbReference>
<dbReference type="NCBIfam" id="NF003587">
    <property type="entry name" value="PRK05253.1"/>
    <property type="match status" value="1"/>
</dbReference>
<dbReference type="NCBIfam" id="NF009214">
    <property type="entry name" value="PRK12563.1"/>
    <property type="match status" value="1"/>
</dbReference>
<dbReference type="PANTHER" id="PTHR43196">
    <property type="entry name" value="SULFATE ADENYLYLTRANSFERASE SUBUNIT 2"/>
    <property type="match status" value="1"/>
</dbReference>
<dbReference type="PANTHER" id="PTHR43196:SF1">
    <property type="entry name" value="SULFATE ADENYLYLTRANSFERASE SUBUNIT 2"/>
    <property type="match status" value="1"/>
</dbReference>
<dbReference type="Pfam" id="PF01507">
    <property type="entry name" value="PAPS_reduct"/>
    <property type="match status" value="1"/>
</dbReference>
<dbReference type="PIRSF" id="PIRSF002936">
    <property type="entry name" value="CysDAde_trans"/>
    <property type="match status" value="1"/>
</dbReference>
<dbReference type="SUPFAM" id="SSF52402">
    <property type="entry name" value="Adenine nucleotide alpha hydrolases-like"/>
    <property type="match status" value="1"/>
</dbReference>
<organism>
    <name type="scientific">Rhizobium tropici</name>
    <dbReference type="NCBI Taxonomy" id="398"/>
    <lineage>
        <taxon>Bacteria</taxon>
        <taxon>Pseudomonadati</taxon>
        <taxon>Pseudomonadota</taxon>
        <taxon>Alphaproteobacteria</taxon>
        <taxon>Hyphomicrobiales</taxon>
        <taxon>Rhizobiaceae</taxon>
        <taxon>Rhizobium/Agrobacterium group</taxon>
        <taxon>Rhizobium</taxon>
    </lineage>
</organism>
<proteinExistence type="inferred from homology"/>
<sequence>MSFDNLRYLESEAIHIIREVAATFSNPVVLYSIGKDSSVLLHLAMKAFFPGKPPFPFLHVDTRWKFREMIDFRDRMMREMDLKLIVHVNQDGIDQGISPFRDGSNVHTHMMKTMALRQALDKFSFDAALAGARREEEKSRAKERIFSIRNAQHAWDPKRQRPEMWRTYNTRVSAGETMRVFPLSNWTELDVWEYNQKENIPVVPLYFAAPRPVVQRGAGMIMVDDERMPLEPDETVTQRMIRFRTLGCYPLTGAIESSAETVPEILREIVEARTSERQSRLIDFDEAGAMEKKKREGYF</sequence>
<comment type="function">
    <text>Proposed to provide activated sulfate for transfer to nod factor.</text>
</comment>
<comment type="catalytic activity">
    <reaction>
        <text>sulfate + ATP + H(+) = adenosine 5'-phosphosulfate + diphosphate</text>
        <dbReference type="Rhea" id="RHEA:18133"/>
        <dbReference type="ChEBI" id="CHEBI:15378"/>
        <dbReference type="ChEBI" id="CHEBI:16189"/>
        <dbReference type="ChEBI" id="CHEBI:30616"/>
        <dbReference type="ChEBI" id="CHEBI:33019"/>
        <dbReference type="ChEBI" id="CHEBI:58243"/>
        <dbReference type="EC" id="2.7.7.4"/>
    </reaction>
</comment>
<comment type="subunit">
    <text evidence="1">Sulfate-activating enzymes, NodP and NodQ, may be physically associated.</text>
</comment>
<comment type="similarity">
    <text evidence="1">Belongs to the PAPS reductase family. CysD subfamily.</text>
</comment>